<keyword id="KW-1185">Reference proteome</keyword>
<keyword id="KW-0687">Ribonucleoprotein</keyword>
<keyword id="KW-0689">Ribosomal protein</keyword>
<evidence type="ECO:0000255" key="1">
    <source>
        <dbReference type="HAMAP-Rule" id="MF_00385"/>
    </source>
</evidence>
<evidence type="ECO:0000305" key="2"/>
<comment type="similarity">
    <text evidence="1">Belongs to the bacterial ribosomal protein bS16 family.</text>
</comment>
<feature type="chain" id="PRO_1000049269" description="Small ribosomal subunit protein bS16">
    <location>
        <begin position="1"/>
        <end position="83"/>
    </location>
</feature>
<reference key="1">
    <citation type="journal article" date="2007" name="PLoS Genet.">
        <title>A tale of two oxidation states: bacterial colonization of arsenic-rich environments.</title>
        <authorList>
            <person name="Muller D."/>
            <person name="Medigue C."/>
            <person name="Koechler S."/>
            <person name="Barbe V."/>
            <person name="Barakat M."/>
            <person name="Talla E."/>
            <person name="Bonnefoy V."/>
            <person name="Krin E."/>
            <person name="Arsene-Ploetze F."/>
            <person name="Carapito C."/>
            <person name="Chandler M."/>
            <person name="Cournoyer B."/>
            <person name="Cruveiller S."/>
            <person name="Dossat C."/>
            <person name="Duval S."/>
            <person name="Heymann M."/>
            <person name="Leize E."/>
            <person name="Lieutaud A."/>
            <person name="Lievremont D."/>
            <person name="Makita Y."/>
            <person name="Mangenot S."/>
            <person name="Nitschke W."/>
            <person name="Ortet P."/>
            <person name="Perdrial N."/>
            <person name="Schoepp B."/>
            <person name="Siguier P."/>
            <person name="Simeonova D.D."/>
            <person name="Rouy Z."/>
            <person name="Segurens B."/>
            <person name="Turlin E."/>
            <person name="Vallenet D."/>
            <person name="van Dorsselaer A."/>
            <person name="Weiss S."/>
            <person name="Weissenbach J."/>
            <person name="Lett M.-C."/>
            <person name="Danchin A."/>
            <person name="Bertin P.N."/>
        </authorList>
    </citation>
    <scope>NUCLEOTIDE SEQUENCE [LARGE SCALE GENOMIC DNA]</scope>
    <source>
        <strain>ULPAs1</strain>
    </source>
</reference>
<proteinExistence type="inferred from homology"/>
<dbReference type="EMBL" id="CU207211">
    <property type="protein sequence ID" value="CAL60822.1"/>
    <property type="molecule type" value="Genomic_DNA"/>
</dbReference>
<dbReference type="SMR" id="A4G2T5"/>
<dbReference type="STRING" id="204773.HEAR0623"/>
<dbReference type="KEGG" id="har:HEAR0623"/>
<dbReference type="eggNOG" id="COG0228">
    <property type="taxonomic scope" value="Bacteria"/>
</dbReference>
<dbReference type="HOGENOM" id="CLU_100590_5_1_4"/>
<dbReference type="OrthoDB" id="9807878at2"/>
<dbReference type="Proteomes" id="UP000006697">
    <property type="component" value="Chromosome"/>
</dbReference>
<dbReference type="GO" id="GO:0005737">
    <property type="term" value="C:cytoplasm"/>
    <property type="evidence" value="ECO:0007669"/>
    <property type="project" value="UniProtKB-ARBA"/>
</dbReference>
<dbReference type="GO" id="GO:0015935">
    <property type="term" value="C:small ribosomal subunit"/>
    <property type="evidence" value="ECO:0007669"/>
    <property type="project" value="TreeGrafter"/>
</dbReference>
<dbReference type="GO" id="GO:0003735">
    <property type="term" value="F:structural constituent of ribosome"/>
    <property type="evidence" value="ECO:0007669"/>
    <property type="project" value="InterPro"/>
</dbReference>
<dbReference type="GO" id="GO:0006412">
    <property type="term" value="P:translation"/>
    <property type="evidence" value="ECO:0007669"/>
    <property type="project" value="UniProtKB-UniRule"/>
</dbReference>
<dbReference type="Gene3D" id="3.30.1320.10">
    <property type="match status" value="1"/>
</dbReference>
<dbReference type="HAMAP" id="MF_00385">
    <property type="entry name" value="Ribosomal_bS16"/>
    <property type="match status" value="1"/>
</dbReference>
<dbReference type="InterPro" id="IPR000307">
    <property type="entry name" value="Ribosomal_bS16"/>
</dbReference>
<dbReference type="InterPro" id="IPR020592">
    <property type="entry name" value="Ribosomal_bS16_CS"/>
</dbReference>
<dbReference type="InterPro" id="IPR023803">
    <property type="entry name" value="Ribosomal_bS16_dom_sf"/>
</dbReference>
<dbReference type="NCBIfam" id="TIGR00002">
    <property type="entry name" value="S16"/>
    <property type="match status" value="1"/>
</dbReference>
<dbReference type="PANTHER" id="PTHR12919">
    <property type="entry name" value="30S RIBOSOMAL PROTEIN S16"/>
    <property type="match status" value="1"/>
</dbReference>
<dbReference type="PANTHER" id="PTHR12919:SF20">
    <property type="entry name" value="SMALL RIBOSOMAL SUBUNIT PROTEIN BS16M"/>
    <property type="match status" value="1"/>
</dbReference>
<dbReference type="Pfam" id="PF00886">
    <property type="entry name" value="Ribosomal_S16"/>
    <property type="match status" value="1"/>
</dbReference>
<dbReference type="SUPFAM" id="SSF54565">
    <property type="entry name" value="Ribosomal protein S16"/>
    <property type="match status" value="1"/>
</dbReference>
<dbReference type="PROSITE" id="PS00732">
    <property type="entry name" value="RIBOSOMAL_S16"/>
    <property type="match status" value="1"/>
</dbReference>
<gene>
    <name evidence="1" type="primary">rpsP</name>
    <name type="ordered locus">HEAR0623</name>
</gene>
<accession>A4G2T5</accession>
<sequence>MVVIRLARGGAKKRPFFNIVATDSRNRRDGRFIERIGFYNPVASGAEESVRIAQDRLAYWQGVGAQLSPTVARLVAQAGKAAA</sequence>
<organism>
    <name type="scientific">Herminiimonas arsenicoxydans</name>
    <dbReference type="NCBI Taxonomy" id="204773"/>
    <lineage>
        <taxon>Bacteria</taxon>
        <taxon>Pseudomonadati</taxon>
        <taxon>Pseudomonadota</taxon>
        <taxon>Betaproteobacteria</taxon>
        <taxon>Burkholderiales</taxon>
        <taxon>Oxalobacteraceae</taxon>
        <taxon>Herminiimonas</taxon>
    </lineage>
</organism>
<protein>
    <recommendedName>
        <fullName evidence="1">Small ribosomal subunit protein bS16</fullName>
    </recommendedName>
    <alternativeName>
        <fullName evidence="2">30S ribosomal protein S16</fullName>
    </alternativeName>
</protein>
<name>RS16_HERAR</name>